<dbReference type="EC" id="3.4.21.68"/>
<dbReference type="EMBL" id="M63987">
    <property type="protein sequence ID" value="AAA31591.1"/>
    <property type="molecule type" value="mRNA"/>
</dbReference>
<dbReference type="EMBL" id="M63986">
    <property type="protein sequence ID" value="AAA31592.1"/>
    <property type="molecule type" value="mRNA"/>
</dbReference>
<dbReference type="PIR" id="JS0597">
    <property type="entry name" value="JS0597"/>
</dbReference>
<dbReference type="PDB" id="1A5I">
    <property type="method" value="X-ray"/>
    <property type="resolution" value="2.90 A"/>
    <property type="chains" value="A=213-477"/>
</dbReference>
<dbReference type="PDBsum" id="1A5I"/>
<dbReference type="SMR" id="P98119"/>
<dbReference type="ELM" id="P98119"/>
<dbReference type="MEROPS" id="S01.239"/>
<dbReference type="GlyConnect" id="544">
    <property type="glycosylation" value="37 N-Linked glycans (2 sites)"/>
</dbReference>
<dbReference type="EvolutionaryTrace" id="P98119"/>
<dbReference type="GO" id="GO:0005615">
    <property type="term" value="C:extracellular space"/>
    <property type="evidence" value="ECO:0007669"/>
    <property type="project" value="TreeGrafter"/>
</dbReference>
<dbReference type="GO" id="GO:0005509">
    <property type="term" value="F:calcium ion binding"/>
    <property type="evidence" value="ECO:0007669"/>
    <property type="project" value="InterPro"/>
</dbReference>
<dbReference type="GO" id="GO:0004252">
    <property type="term" value="F:serine-type endopeptidase activity"/>
    <property type="evidence" value="ECO:0007669"/>
    <property type="project" value="UniProtKB-EC"/>
</dbReference>
<dbReference type="GO" id="GO:0031639">
    <property type="term" value="P:plasminogen activation"/>
    <property type="evidence" value="ECO:0007669"/>
    <property type="project" value="InterPro"/>
</dbReference>
<dbReference type="GO" id="GO:0048008">
    <property type="term" value="P:platelet-derived growth factor receptor signaling pathway"/>
    <property type="evidence" value="ECO:0007669"/>
    <property type="project" value="TreeGrafter"/>
</dbReference>
<dbReference type="GO" id="GO:0014909">
    <property type="term" value="P:smooth muscle cell migration"/>
    <property type="evidence" value="ECO:0007669"/>
    <property type="project" value="TreeGrafter"/>
</dbReference>
<dbReference type="CDD" id="cd00054">
    <property type="entry name" value="EGF_CA"/>
    <property type="match status" value="1"/>
</dbReference>
<dbReference type="CDD" id="cd00061">
    <property type="entry name" value="FN1"/>
    <property type="match status" value="1"/>
</dbReference>
<dbReference type="CDD" id="cd00108">
    <property type="entry name" value="KR"/>
    <property type="match status" value="1"/>
</dbReference>
<dbReference type="CDD" id="cd00190">
    <property type="entry name" value="Tryp_SPc"/>
    <property type="match status" value="1"/>
</dbReference>
<dbReference type="FunFam" id="2.40.10.10:FF:000054">
    <property type="entry name" value="Complement C1r subcomponent"/>
    <property type="match status" value="1"/>
</dbReference>
<dbReference type="FunFam" id="2.10.25.10:FF:000483">
    <property type="entry name" value="Tissue-type plasminogen activator"/>
    <property type="match status" value="1"/>
</dbReference>
<dbReference type="FunFam" id="2.40.10.10:FF:000058">
    <property type="entry name" value="Tissue-type plasminogen activator"/>
    <property type="match status" value="1"/>
</dbReference>
<dbReference type="FunFam" id="2.40.20.10:FF:000001">
    <property type="entry name" value="Urokinase-type plasminogen activator"/>
    <property type="match status" value="1"/>
</dbReference>
<dbReference type="Gene3D" id="2.10.70.10">
    <property type="entry name" value="Complement Module, domain 1"/>
    <property type="match status" value="1"/>
</dbReference>
<dbReference type="Gene3D" id="2.10.25.10">
    <property type="entry name" value="Laminin"/>
    <property type="match status" value="1"/>
</dbReference>
<dbReference type="Gene3D" id="2.40.20.10">
    <property type="entry name" value="Plasminogen Kringle 4"/>
    <property type="match status" value="1"/>
</dbReference>
<dbReference type="Gene3D" id="2.40.10.10">
    <property type="entry name" value="Trypsin-like serine proteases"/>
    <property type="match status" value="2"/>
</dbReference>
<dbReference type="InterPro" id="IPR001881">
    <property type="entry name" value="EGF-like_Ca-bd_dom"/>
</dbReference>
<dbReference type="InterPro" id="IPR000742">
    <property type="entry name" value="EGF-like_dom"/>
</dbReference>
<dbReference type="InterPro" id="IPR000083">
    <property type="entry name" value="Fibronectin_type1"/>
</dbReference>
<dbReference type="InterPro" id="IPR000001">
    <property type="entry name" value="Kringle"/>
</dbReference>
<dbReference type="InterPro" id="IPR013806">
    <property type="entry name" value="Kringle-like"/>
</dbReference>
<dbReference type="InterPro" id="IPR018056">
    <property type="entry name" value="Kringle_CS"/>
</dbReference>
<dbReference type="InterPro" id="IPR038178">
    <property type="entry name" value="Kringle_sf"/>
</dbReference>
<dbReference type="InterPro" id="IPR009003">
    <property type="entry name" value="Peptidase_S1_PA"/>
</dbReference>
<dbReference type="InterPro" id="IPR043504">
    <property type="entry name" value="Peptidase_S1_PA_chymotrypsin"/>
</dbReference>
<dbReference type="InterPro" id="IPR001314">
    <property type="entry name" value="Peptidase_S1A"/>
</dbReference>
<dbReference type="InterPro" id="IPR050127">
    <property type="entry name" value="Serine_Proteases_S1"/>
</dbReference>
<dbReference type="InterPro" id="IPR026280">
    <property type="entry name" value="Tissue_plasm_act"/>
</dbReference>
<dbReference type="InterPro" id="IPR001254">
    <property type="entry name" value="Trypsin_dom"/>
</dbReference>
<dbReference type="InterPro" id="IPR018114">
    <property type="entry name" value="TRYPSIN_HIS"/>
</dbReference>
<dbReference type="InterPro" id="IPR033116">
    <property type="entry name" value="TRYPSIN_SER"/>
</dbReference>
<dbReference type="PANTHER" id="PTHR24264:SF42">
    <property type="entry name" value="TISSUE-TYPE PLASMINOGEN ACTIVATOR"/>
    <property type="match status" value="1"/>
</dbReference>
<dbReference type="PANTHER" id="PTHR24264">
    <property type="entry name" value="TRYPSIN-RELATED"/>
    <property type="match status" value="1"/>
</dbReference>
<dbReference type="Pfam" id="PF00008">
    <property type="entry name" value="EGF"/>
    <property type="match status" value="1"/>
</dbReference>
<dbReference type="Pfam" id="PF00039">
    <property type="entry name" value="fn1"/>
    <property type="match status" value="1"/>
</dbReference>
<dbReference type="Pfam" id="PF00051">
    <property type="entry name" value="Kringle"/>
    <property type="match status" value="1"/>
</dbReference>
<dbReference type="Pfam" id="PF00089">
    <property type="entry name" value="Trypsin"/>
    <property type="match status" value="1"/>
</dbReference>
<dbReference type="PIRSF" id="PIRSF001145">
    <property type="entry name" value="Tissue_plasm_act"/>
    <property type="match status" value="1"/>
</dbReference>
<dbReference type="PRINTS" id="PR00722">
    <property type="entry name" value="CHYMOTRYPSIN"/>
</dbReference>
<dbReference type="PRINTS" id="PR00018">
    <property type="entry name" value="KRINGLE"/>
</dbReference>
<dbReference type="SMART" id="SM00181">
    <property type="entry name" value="EGF"/>
    <property type="match status" value="1"/>
</dbReference>
<dbReference type="SMART" id="SM00179">
    <property type="entry name" value="EGF_CA"/>
    <property type="match status" value="1"/>
</dbReference>
<dbReference type="SMART" id="SM00058">
    <property type="entry name" value="FN1"/>
    <property type="match status" value="1"/>
</dbReference>
<dbReference type="SMART" id="SM00130">
    <property type="entry name" value="KR"/>
    <property type="match status" value="1"/>
</dbReference>
<dbReference type="SMART" id="SM00020">
    <property type="entry name" value="Tryp_SPc"/>
    <property type="match status" value="1"/>
</dbReference>
<dbReference type="SUPFAM" id="SSF57603">
    <property type="entry name" value="FnI-like domain"/>
    <property type="match status" value="1"/>
</dbReference>
<dbReference type="SUPFAM" id="SSF57440">
    <property type="entry name" value="Kringle-like"/>
    <property type="match status" value="1"/>
</dbReference>
<dbReference type="SUPFAM" id="SSF50494">
    <property type="entry name" value="Trypsin-like serine proteases"/>
    <property type="match status" value="1"/>
</dbReference>
<dbReference type="PROSITE" id="PS00022">
    <property type="entry name" value="EGF_1"/>
    <property type="match status" value="1"/>
</dbReference>
<dbReference type="PROSITE" id="PS01186">
    <property type="entry name" value="EGF_2"/>
    <property type="match status" value="1"/>
</dbReference>
<dbReference type="PROSITE" id="PS50026">
    <property type="entry name" value="EGF_3"/>
    <property type="match status" value="1"/>
</dbReference>
<dbReference type="PROSITE" id="PS01253">
    <property type="entry name" value="FN1_1"/>
    <property type="match status" value="1"/>
</dbReference>
<dbReference type="PROSITE" id="PS51091">
    <property type="entry name" value="FN1_2"/>
    <property type="match status" value="1"/>
</dbReference>
<dbReference type="PROSITE" id="PS00021">
    <property type="entry name" value="KRINGLE_1"/>
    <property type="match status" value="1"/>
</dbReference>
<dbReference type="PROSITE" id="PS50070">
    <property type="entry name" value="KRINGLE_2"/>
    <property type="match status" value="1"/>
</dbReference>
<dbReference type="PROSITE" id="PS50240">
    <property type="entry name" value="TRYPSIN_DOM"/>
    <property type="match status" value="1"/>
</dbReference>
<dbReference type="PROSITE" id="PS00134">
    <property type="entry name" value="TRYPSIN_HIS"/>
    <property type="match status" value="1"/>
</dbReference>
<dbReference type="PROSITE" id="PS00135">
    <property type="entry name" value="TRYPSIN_SER"/>
    <property type="match status" value="1"/>
</dbReference>
<feature type="signal peptide" evidence="2">
    <location>
        <begin position="1"/>
        <end position="36"/>
    </location>
</feature>
<feature type="chain" id="PRO_0000028340" description="Salivary plasminogen activator alpha 1">
    <location>
        <begin position="37"/>
        <end position="477"/>
    </location>
</feature>
<feature type="domain" description="Fibronectin type-I" evidence="6">
    <location>
        <begin position="40"/>
        <end position="82"/>
    </location>
</feature>
<feature type="domain" description="EGF-like" evidence="3">
    <location>
        <begin position="83"/>
        <end position="121"/>
    </location>
</feature>
<feature type="domain" description="Kringle" evidence="4">
    <location>
        <begin position="128"/>
        <end position="209"/>
    </location>
</feature>
<feature type="domain" description="Peptidase S1" evidence="5">
    <location>
        <begin position="226"/>
        <end position="476"/>
    </location>
</feature>
<feature type="active site" description="Charge relay system">
    <location>
        <position position="272"/>
    </location>
</feature>
<feature type="active site" description="Charge relay system">
    <location>
        <position position="321"/>
    </location>
</feature>
<feature type="active site" description="Charge relay system">
    <location>
        <position position="428"/>
    </location>
</feature>
<feature type="glycosylation site" id="CAR_000027" description="N-linked (GlcNAc...) asparagine">
    <location>
        <position position="153"/>
    </location>
</feature>
<feature type="glycosylation site" id="CAR_000028" description="N-linked (GlcNAc...) asparagine">
    <location>
        <position position="398"/>
    </location>
</feature>
<feature type="disulfide bond" evidence="1">
    <location>
        <begin position="42"/>
        <end position="72"/>
    </location>
</feature>
<feature type="disulfide bond" evidence="1">
    <location>
        <begin position="70"/>
        <end position="79"/>
    </location>
</feature>
<feature type="disulfide bond" evidence="1">
    <location>
        <begin position="87"/>
        <end position="98"/>
    </location>
</feature>
<feature type="disulfide bond" evidence="1">
    <location>
        <begin position="92"/>
        <end position="109"/>
    </location>
</feature>
<feature type="disulfide bond" evidence="1">
    <location>
        <begin position="111"/>
        <end position="120"/>
    </location>
</feature>
<feature type="disulfide bond" evidence="1">
    <location>
        <begin position="128"/>
        <end position="209"/>
    </location>
</feature>
<feature type="disulfide bond" evidence="1">
    <location>
        <begin position="149"/>
        <end position="191"/>
    </location>
</feature>
<feature type="disulfide bond" evidence="1">
    <location>
        <begin position="180"/>
        <end position="204"/>
    </location>
</feature>
<feature type="disulfide bond">
    <location>
        <begin position="214"/>
        <end position="345"/>
    </location>
</feature>
<feature type="disulfide bond">
    <location>
        <begin position="257"/>
        <end position="273"/>
    </location>
</feature>
<feature type="disulfide bond">
    <location>
        <begin position="265"/>
        <end position="334"/>
    </location>
</feature>
<feature type="disulfide bond">
    <location>
        <begin position="359"/>
        <end position="434"/>
    </location>
</feature>
<feature type="disulfide bond">
    <location>
        <begin position="391"/>
        <end position="407"/>
    </location>
</feature>
<feature type="disulfide bond">
    <location>
        <begin position="424"/>
        <end position="452"/>
    </location>
</feature>
<feature type="helix" evidence="7">
    <location>
        <begin position="234"/>
        <end position="236"/>
    </location>
</feature>
<feature type="strand" evidence="7">
    <location>
        <begin position="240"/>
        <end position="245"/>
    </location>
</feature>
<feature type="strand" evidence="7">
    <location>
        <begin position="248"/>
        <end position="251"/>
    </location>
</feature>
<feature type="strand" evidence="7">
    <location>
        <begin position="254"/>
        <end position="263"/>
    </location>
</feature>
<feature type="strand" evidence="7">
    <location>
        <begin position="266"/>
        <end position="269"/>
    </location>
</feature>
<feature type="helix" evidence="7">
    <location>
        <begin position="271"/>
        <end position="273"/>
    </location>
</feature>
<feature type="turn" evidence="7">
    <location>
        <begin position="280"/>
        <end position="282"/>
    </location>
</feature>
<feature type="strand" evidence="7">
    <location>
        <begin position="284"/>
        <end position="288"/>
    </location>
</feature>
<feature type="strand" evidence="7">
    <location>
        <begin position="290"/>
        <end position="294"/>
    </location>
</feature>
<feature type="strand" evidence="7">
    <location>
        <begin position="300"/>
        <end position="309"/>
    </location>
</feature>
<feature type="turn" evidence="7">
    <location>
        <begin position="315"/>
        <end position="317"/>
    </location>
</feature>
<feature type="strand" evidence="7">
    <location>
        <begin position="323"/>
        <end position="328"/>
    </location>
</feature>
<feature type="strand" evidence="7">
    <location>
        <begin position="330"/>
        <end position="332"/>
    </location>
</feature>
<feature type="strand" evidence="7">
    <location>
        <begin position="358"/>
        <end position="364"/>
    </location>
</feature>
<feature type="strand" evidence="7">
    <location>
        <begin position="366"/>
        <end position="370"/>
    </location>
</feature>
<feature type="strand" evidence="7">
    <location>
        <begin position="379"/>
        <end position="385"/>
    </location>
</feature>
<feature type="helix" evidence="7">
    <location>
        <begin position="388"/>
        <end position="390"/>
    </location>
</feature>
<feature type="turn" evidence="7">
    <location>
        <begin position="393"/>
        <end position="398"/>
    </location>
</feature>
<feature type="strand" evidence="7">
    <location>
        <begin position="405"/>
        <end position="409"/>
    </location>
</feature>
<feature type="strand" evidence="7">
    <location>
        <begin position="414"/>
        <end position="416"/>
    </location>
</feature>
<feature type="strand" evidence="7">
    <location>
        <begin position="431"/>
        <end position="436"/>
    </location>
</feature>
<feature type="strand" evidence="7">
    <location>
        <begin position="439"/>
        <end position="448"/>
    </location>
</feature>
<feature type="strand" evidence="7">
    <location>
        <begin position="450"/>
        <end position="453"/>
    </location>
</feature>
<feature type="strand" evidence="7">
    <location>
        <begin position="459"/>
        <end position="463"/>
    </location>
</feature>
<feature type="helix" evidence="7">
    <location>
        <begin position="464"/>
        <end position="467"/>
    </location>
</feature>
<feature type="helix" evidence="7">
    <location>
        <begin position="468"/>
        <end position="474"/>
    </location>
</feature>
<sequence>MVNTMKTKLLCVLLLCGAVFSLPRQETYRQLARGSRAYGVACKDEITQMTYRRQESWLRPEVRSKRVEHCQCDRGQARCHTVPVNSCSEPRCFNGGTCWQAVYFSDFVCQCPAGYTGKRCEVDTRATCYEGQGVTYRGTWSTAESRVECINWNSSLLTRRTYNGRMPDAFNLGLGNHNYCRNPNGAPKPWCYVIKAGKFTSESCSVPVCSKATCGLRKYKEPQLHSTGGLFTDITSHPWQAAIFAQNRRSSGERFLCGGILISSCWVLTAAHCFQESYLPDQLKVVLGRTYRVKPGEEEQTFKVKKYIVHKEFDDDTYNNDIALLQLKSDSPQCAQESDSVRAICLPEANLQLPDWTECELSGYGKHKSSSPFYSEQLKEGHVRLYPSSRCAPKFLFNKTVTNNMLCAGDTRSGEIYPNVHDACQGDSGGPLVCMNDNHMTLLGIISWGVGCGEKDVPGVYTKVTNYLGWIRDNMHL</sequence>
<reference key="1">
    <citation type="journal article" date="1991" name="Gene">
        <title>The plasminogen activator family from the salivary gland of the vampire bat Desmodus rotundus: cloning and expression.</title>
        <authorList>
            <person name="Kraetzschmar J."/>
            <person name="Haendler B."/>
            <person name="Langer G."/>
            <person name="Boidol W."/>
            <person name="Bringmann P."/>
            <person name="Alagon A."/>
            <person name="Donner P."/>
            <person name="Schleuning W.-D."/>
        </authorList>
    </citation>
    <scope>NUCLEOTIDE SEQUENCE [MRNA]</scope>
    <source>
        <tissue>Salivary gland</tissue>
    </source>
</reference>
<reference key="2">
    <citation type="journal article" date="1992" name="Ann. N. Y. Acad. Sci.">
        <title>Plasminogen activators from the saliva of Desmodus rotundus (common vampire bat): unique fibrin specificity.</title>
        <authorList>
            <person name="Schleuning W.-D."/>
            <person name="Alagon A."/>
            <person name="Boidol W."/>
            <person name="Bringmann P."/>
            <person name="Petri T."/>
            <person name="Kraetzschmar J."/>
            <person name="Haendler B."/>
            <person name="Langer G."/>
            <person name="Baldus B."/>
            <person name="Witt W."/>
            <person name="Donner P."/>
        </authorList>
    </citation>
    <scope>CHARACTERIZATION</scope>
</reference>
<reference key="3">
    <citation type="journal article" date="1997" name="Biochemistry">
        <title>Catalytic domain structure of vampire bat plasminogen activator: a molecular paradigm for proteolysis without activation cleavage.</title>
        <authorList>
            <person name="Renatus M."/>
            <person name="Stubbs M.T."/>
            <person name="Huber R."/>
            <person name="Bringmann P."/>
            <person name="Donner P."/>
            <person name="Schleuning W.-D."/>
            <person name="Bode W."/>
        </authorList>
    </citation>
    <scope>X-RAY CRYSTALLOGRAPHY (2.9 ANGSTROMS)</scope>
    <source>
        <tissue>Salivary gland</tissue>
    </source>
</reference>
<accession>P98119</accession>
<proteinExistence type="evidence at protein level"/>
<comment type="function">
    <text>Probably essential to support the feeding habits of this exclusively haematophagous animal. Potent thrombolytic agent.</text>
</comment>
<comment type="catalytic activity">
    <reaction>
        <text>Specific cleavage of Arg-|-Val bond in plasminogen to form plasmin.</text>
        <dbReference type="EC" id="3.4.21.68"/>
    </reaction>
</comment>
<comment type="activity regulation">
    <text>Activity toward plasminogen is stimulated in the presence of fibrin I.</text>
</comment>
<comment type="subunit">
    <text>Monomer.</text>
</comment>
<comment type="subcellular location">
    <subcellularLocation>
        <location>Secreted</location>
    </subcellularLocation>
</comment>
<comment type="domain">
    <text>The fibronectin type-I domain mediates binding to fibrin, and the kringle domain apparently mediates fibrin-induced stimulation of activity.</text>
</comment>
<comment type="similarity">
    <text evidence="5">Belongs to the peptidase S1 family.</text>
</comment>
<evidence type="ECO:0000250" key="1"/>
<evidence type="ECO:0000255" key="2"/>
<evidence type="ECO:0000255" key="3">
    <source>
        <dbReference type="PROSITE-ProRule" id="PRU00076"/>
    </source>
</evidence>
<evidence type="ECO:0000255" key="4">
    <source>
        <dbReference type="PROSITE-ProRule" id="PRU00121"/>
    </source>
</evidence>
<evidence type="ECO:0000255" key="5">
    <source>
        <dbReference type="PROSITE-ProRule" id="PRU00274"/>
    </source>
</evidence>
<evidence type="ECO:0000255" key="6">
    <source>
        <dbReference type="PROSITE-ProRule" id="PRU00478"/>
    </source>
</evidence>
<evidence type="ECO:0007829" key="7">
    <source>
        <dbReference type="PDB" id="1A5I"/>
    </source>
</evidence>
<name>URT1_DESRO</name>
<protein>
    <recommendedName>
        <fullName>Salivary plasminogen activator alpha 1</fullName>
        <ecNumber>3.4.21.68</ecNumber>
    </recommendedName>
    <alternativeName>
        <fullName>DSPA alpha-1</fullName>
    </alternativeName>
</protein>
<keyword id="KW-0002">3D-structure</keyword>
<keyword id="KW-1015">Disulfide bond</keyword>
<keyword id="KW-0245">EGF-like domain</keyword>
<keyword id="KW-0325">Glycoprotein</keyword>
<keyword id="KW-0378">Hydrolase</keyword>
<keyword id="KW-0420">Kringle</keyword>
<keyword id="KW-0617">Plasminogen activation</keyword>
<keyword id="KW-0645">Protease</keyword>
<keyword id="KW-0964">Secreted</keyword>
<keyword id="KW-0720">Serine protease</keyword>
<keyword id="KW-0732">Signal</keyword>
<organism>
    <name type="scientific">Desmodus rotundus</name>
    <name type="common">Vampire bat</name>
    <dbReference type="NCBI Taxonomy" id="9430"/>
    <lineage>
        <taxon>Eukaryota</taxon>
        <taxon>Metazoa</taxon>
        <taxon>Chordata</taxon>
        <taxon>Craniata</taxon>
        <taxon>Vertebrata</taxon>
        <taxon>Euteleostomi</taxon>
        <taxon>Mammalia</taxon>
        <taxon>Eutheria</taxon>
        <taxon>Laurasiatheria</taxon>
        <taxon>Chiroptera</taxon>
        <taxon>Yangochiroptera</taxon>
        <taxon>Phyllostomidae</taxon>
        <taxon>Desmodontinae</taxon>
        <taxon>Desmodus</taxon>
    </lineage>
</organism>